<proteinExistence type="evidence at protein level"/>
<reference key="1">
    <citation type="journal article" date="2004" name="Nat. Genet.">
        <title>Complete sequencing and characterization of 21,243 full-length human cDNAs.</title>
        <authorList>
            <person name="Ota T."/>
            <person name="Suzuki Y."/>
            <person name="Nishikawa T."/>
            <person name="Otsuki T."/>
            <person name="Sugiyama T."/>
            <person name="Irie R."/>
            <person name="Wakamatsu A."/>
            <person name="Hayashi K."/>
            <person name="Sato H."/>
            <person name="Nagai K."/>
            <person name="Kimura K."/>
            <person name="Makita H."/>
            <person name="Sekine M."/>
            <person name="Obayashi M."/>
            <person name="Nishi T."/>
            <person name="Shibahara T."/>
            <person name="Tanaka T."/>
            <person name="Ishii S."/>
            <person name="Yamamoto J."/>
            <person name="Saito K."/>
            <person name="Kawai Y."/>
            <person name="Isono Y."/>
            <person name="Nakamura Y."/>
            <person name="Nagahari K."/>
            <person name="Murakami K."/>
            <person name="Yasuda T."/>
            <person name="Iwayanagi T."/>
            <person name="Wagatsuma M."/>
            <person name="Shiratori A."/>
            <person name="Sudo H."/>
            <person name="Hosoiri T."/>
            <person name="Kaku Y."/>
            <person name="Kodaira H."/>
            <person name="Kondo H."/>
            <person name="Sugawara M."/>
            <person name="Takahashi M."/>
            <person name="Kanda K."/>
            <person name="Yokoi T."/>
            <person name="Furuya T."/>
            <person name="Kikkawa E."/>
            <person name="Omura Y."/>
            <person name="Abe K."/>
            <person name="Kamihara K."/>
            <person name="Katsuta N."/>
            <person name="Sato K."/>
            <person name="Tanikawa M."/>
            <person name="Yamazaki M."/>
            <person name="Ninomiya K."/>
            <person name="Ishibashi T."/>
            <person name="Yamashita H."/>
            <person name="Murakawa K."/>
            <person name="Fujimori K."/>
            <person name="Tanai H."/>
            <person name="Kimata M."/>
            <person name="Watanabe M."/>
            <person name="Hiraoka S."/>
            <person name="Chiba Y."/>
            <person name="Ishida S."/>
            <person name="Ono Y."/>
            <person name="Takiguchi S."/>
            <person name="Watanabe S."/>
            <person name="Yosida M."/>
            <person name="Hotuta T."/>
            <person name="Kusano J."/>
            <person name="Kanehori K."/>
            <person name="Takahashi-Fujii A."/>
            <person name="Hara H."/>
            <person name="Tanase T.-O."/>
            <person name="Nomura Y."/>
            <person name="Togiya S."/>
            <person name="Komai F."/>
            <person name="Hara R."/>
            <person name="Takeuchi K."/>
            <person name="Arita M."/>
            <person name="Imose N."/>
            <person name="Musashino K."/>
            <person name="Yuuki H."/>
            <person name="Oshima A."/>
            <person name="Sasaki N."/>
            <person name="Aotsuka S."/>
            <person name="Yoshikawa Y."/>
            <person name="Matsunawa H."/>
            <person name="Ichihara T."/>
            <person name="Shiohata N."/>
            <person name="Sano S."/>
            <person name="Moriya S."/>
            <person name="Momiyama H."/>
            <person name="Satoh N."/>
            <person name="Takami S."/>
            <person name="Terashima Y."/>
            <person name="Suzuki O."/>
            <person name="Nakagawa S."/>
            <person name="Senoh A."/>
            <person name="Mizoguchi H."/>
            <person name="Goto Y."/>
            <person name="Shimizu F."/>
            <person name="Wakebe H."/>
            <person name="Hishigaki H."/>
            <person name="Watanabe T."/>
            <person name="Sugiyama A."/>
            <person name="Takemoto M."/>
            <person name="Kawakami B."/>
            <person name="Yamazaki M."/>
            <person name="Watanabe K."/>
            <person name="Kumagai A."/>
            <person name="Itakura S."/>
            <person name="Fukuzumi Y."/>
            <person name="Fujimori Y."/>
            <person name="Komiyama M."/>
            <person name="Tashiro H."/>
            <person name="Tanigami A."/>
            <person name="Fujiwara T."/>
            <person name="Ono T."/>
            <person name="Yamada K."/>
            <person name="Fujii Y."/>
            <person name="Ozaki K."/>
            <person name="Hirao M."/>
            <person name="Ohmori Y."/>
            <person name="Kawabata A."/>
            <person name="Hikiji T."/>
            <person name="Kobatake N."/>
            <person name="Inagaki H."/>
            <person name="Ikema Y."/>
            <person name="Okamoto S."/>
            <person name="Okitani R."/>
            <person name="Kawakami T."/>
            <person name="Noguchi S."/>
            <person name="Itoh T."/>
            <person name="Shigeta K."/>
            <person name="Senba T."/>
            <person name="Matsumura K."/>
            <person name="Nakajima Y."/>
            <person name="Mizuno T."/>
            <person name="Morinaga M."/>
            <person name="Sasaki M."/>
            <person name="Togashi T."/>
            <person name="Oyama M."/>
            <person name="Hata H."/>
            <person name="Watanabe M."/>
            <person name="Komatsu T."/>
            <person name="Mizushima-Sugano J."/>
            <person name="Satoh T."/>
            <person name="Shirai Y."/>
            <person name="Takahashi Y."/>
            <person name="Nakagawa K."/>
            <person name="Okumura K."/>
            <person name="Nagase T."/>
            <person name="Nomura N."/>
            <person name="Kikuchi H."/>
            <person name="Masuho Y."/>
            <person name="Yamashita R."/>
            <person name="Nakai K."/>
            <person name="Yada T."/>
            <person name="Nakamura Y."/>
            <person name="Ohara O."/>
            <person name="Isogai T."/>
            <person name="Sugano S."/>
        </authorList>
    </citation>
    <scope>NUCLEOTIDE SEQUENCE [LARGE SCALE MRNA] (ISOFORM 3)</scope>
    <source>
        <tissue>Cerebellum</tissue>
    </source>
</reference>
<reference key="2">
    <citation type="journal article" date="2001" name="Hum. Mol. Genet.">
        <title>Sequence, structure and pathology of the fully annotated terminal 2 Mb of the short arm of human chromosome 16.</title>
        <authorList>
            <person name="Daniels R.J."/>
            <person name="Peden J.F."/>
            <person name="Lloyd C."/>
            <person name="Horsley S.W."/>
            <person name="Clark K."/>
            <person name="Tufarelli C."/>
            <person name="Kearney L."/>
            <person name="Buckle V.J."/>
            <person name="Doggett N.A."/>
            <person name="Flint J."/>
            <person name="Higgs D.R."/>
        </authorList>
    </citation>
    <scope>NUCLEOTIDE SEQUENCE [LARGE SCALE GENOMIC DNA]</scope>
</reference>
<reference key="3">
    <citation type="journal article" date="2004" name="Nature">
        <title>The sequence and analysis of duplication-rich human chromosome 16.</title>
        <authorList>
            <person name="Martin J."/>
            <person name="Han C."/>
            <person name="Gordon L.A."/>
            <person name="Terry A."/>
            <person name="Prabhakar S."/>
            <person name="She X."/>
            <person name="Xie G."/>
            <person name="Hellsten U."/>
            <person name="Chan Y.M."/>
            <person name="Altherr M."/>
            <person name="Couronne O."/>
            <person name="Aerts A."/>
            <person name="Bajorek E."/>
            <person name="Black S."/>
            <person name="Blumer H."/>
            <person name="Branscomb E."/>
            <person name="Brown N.C."/>
            <person name="Bruno W.J."/>
            <person name="Buckingham J.M."/>
            <person name="Callen D.F."/>
            <person name="Campbell C.S."/>
            <person name="Campbell M.L."/>
            <person name="Campbell E.W."/>
            <person name="Caoile C."/>
            <person name="Challacombe J.F."/>
            <person name="Chasteen L.A."/>
            <person name="Chertkov O."/>
            <person name="Chi H.C."/>
            <person name="Christensen M."/>
            <person name="Clark L.M."/>
            <person name="Cohn J.D."/>
            <person name="Denys M."/>
            <person name="Detter J.C."/>
            <person name="Dickson M."/>
            <person name="Dimitrijevic-Bussod M."/>
            <person name="Escobar J."/>
            <person name="Fawcett J.J."/>
            <person name="Flowers D."/>
            <person name="Fotopulos D."/>
            <person name="Glavina T."/>
            <person name="Gomez M."/>
            <person name="Gonzales E."/>
            <person name="Goodstein D."/>
            <person name="Goodwin L.A."/>
            <person name="Grady D.L."/>
            <person name="Grigoriev I."/>
            <person name="Groza M."/>
            <person name="Hammon N."/>
            <person name="Hawkins T."/>
            <person name="Haydu L."/>
            <person name="Hildebrand C.E."/>
            <person name="Huang W."/>
            <person name="Israni S."/>
            <person name="Jett J."/>
            <person name="Jewett P.B."/>
            <person name="Kadner K."/>
            <person name="Kimball H."/>
            <person name="Kobayashi A."/>
            <person name="Krawczyk M.-C."/>
            <person name="Leyba T."/>
            <person name="Longmire J.L."/>
            <person name="Lopez F."/>
            <person name="Lou Y."/>
            <person name="Lowry S."/>
            <person name="Ludeman T."/>
            <person name="Manohar C.F."/>
            <person name="Mark G.A."/>
            <person name="McMurray K.L."/>
            <person name="Meincke L.J."/>
            <person name="Morgan J."/>
            <person name="Moyzis R.K."/>
            <person name="Mundt M.O."/>
            <person name="Munk A.C."/>
            <person name="Nandkeshwar R.D."/>
            <person name="Pitluck S."/>
            <person name="Pollard M."/>
            <person name="Predki P."/>
            <person name="Parson-Quintana B."/>
            <person name="Ramirez L."/>
            <person name="Rash S."/>
            <person name="Retterer J."/>
            <person name="Ricke D.O."/>
            <person name="Robinson D.L."/>
            <person name="Rodriguez A."/>
            <person name="Salamov A."/>
            <person name="Saunders E.H."/>
            <person name="Scott D."/>
            <person name="Shough T."/>
            <person name="Stallings R.L."/>
            <person name="Stalvey M."/>
            <person name="Sutherland R.D."/>
            <person name="Tapia R."/>
            <person name="Tesmer J.G."/>
            <person name="Thayer N."/>
            <person name="Thompson L.S."/>
            <person name="Tice H."/>
            <person name="Torney D.C."/>
            <person name="Tran-Gyamfi M."/>
            <person name="Tsai M."/>
            <person name="Ulanovsky L.E."/>
            <person name="Ustaszewska A."/>
            <person name="Vo N."/>
            <person name="White P.S."/>
            <person name="Williams A.L."/>
            <person name="Wills P.L."/>
            <person name="Wu J.-R."/>
            <person name="Wu K."/>
            <person name="Yang J."/>
            <person name="DeJong P."/>
            <person name="Bruce D."/>
            <person name="Doggett N.A."/>
            <person name="Deaven L."/>
            <person name="Schmutz J."/>
            <person name="Grimwood J."/>
            <person name="Richardson P."/>
            <person name="Rokhsar D.S."/>
            <person name="Eichler E.E."/>
            <person name="Gilna P."/>
            <person name="Lucas S.M."/>
            <person name="Myers R.M."/>
            <person name="Rubin E.M."/>
            <person name="Pennacchio L.A."/>
        </authorList>
    </citation>
    <scope>NUCLEOTIDE SEQUENCE [LARGE SCALE GENOMIC DNA]</scope>
</reference>
<reference key="4">
    <citation type="submission" date="2005-09" db="EMBL/GenBank/DDBJ databases">
        <authorList>
            <person name="Mural R.J."/>
            <person name="Istrail S."/>
            <person name="Sutton G.G."/>
            <person name="Florea L."/>
            <person name="Halpern A.L."/>
            <person name="Mobarry C.M."/>
            <person name="Lippert R."/>
            <person name="Walenz B."/>
            <person name="Shatkay H."/>
            <person name="Dew I."/>
            <person name="Miller J.R."/>
            <person name="Flanigan M.J."/>
            <person name="Edwards N.J."/>
            <person name="Bolanos R."/>
            <person name="Fasulo D."/>
            <person name="Halldorsson B.V."/>
            <person name="Hannenhalli S."/>
            <person name="Turner R."/>
            <person name="Yooseph S."/>
            <person name="Lu F."/>
            <person name="Nusskern D.R."/>
            <person name="Shue B.C."/>
            <person name="Zheng X.H."/>
            <person name="Zhong F."/>
            <person name="Delcher A.L."/>
            <person name="Huson D.H."/>
            <person name="Kravitz S.A."/>
            <person name="Mouchard L."/>
            <person name="Reinert K."/>
            <person name="Remington K.A."/>
            <person name="Clark A.G."/>
            <person name="Waterman M.S."/>
            <person name="Eichler E.E."/>
            <person name="Adams M.D."/>
            <person name="Hunkapiller M.W."/>
            <person name="Myers E.W."/>
            <person name="Venter J.C."/>
        </authorList>
    </citation>
    <scope>NUCLEOTIDE SEQUENCE [LARGE SCALE GENOMIC DNA]</scope>
</reference>
<reference key="5">
    <citation type="journal article" date="2004" name="Genome Res.">
        <title>The status, quality, and expansion of the NIH full-length cDNA project: the Mammalian Gene Collection (MGC).</title>
        <authorList>
            <consortium name="The MGC Project Team"/>
        </authorList>
    </citation>
    <scope>NUCLEOTIDE SEQUENCE [LARGE SCALE MRNA] (ISOFORMS 1; 2 AND 4)</scope>
    <source>
        <tissue>Brain</tissue>
        <tissue>Eye</tissue>
        <tissue>Skin</tissue>
    </source>
</reference>
<reference key="6">
    <citation type="submission" date="2005-03" db="EMBL/GenBank/DDBJ databases">
        <authorList>
            <person name="Totoki Y."/>
            <person name="Toyoda A."/>
            <person name="Takeda T."/>
            <person name="Sakaki Y."/>
            <person name="Tanaka A."/>
            <person name="Yokoyama S."/>
            <person name="Ohara O."/>
            <person name="Nagase T."/>
            <person name="Kikuno R.F."/>
        </authorList>
    </citation>
    <scope>NUCLEOTIDE SEQUENCE [LARGE SCALE MRNA] OF 1-191</scope>
    <source>
        <tissue>Brain</tissue>
    </source>
</reference>
<feature type="chain" id="PRO_0000313601" description="Hydroxyacylglutathione hydrolase-like protein">
    <location>
        <begin position="1"/>
        <end position="290"/>
    </location>
</feature>
<feature type="binding site" evidence="1">
    <location>
        <position position="54"/>
    </location>
    <ligand>
        <name>Zn(2+)</name>
        <dbReference type="ChEBI" id="CHEBI:29105"/>
        <label>1</label>
    </ligand>
</feature>
<feature type="binding site" evidence="1">
    <location>
        <position position="56"/>
    </location>
    <ligand>
        <name>Zn(2+)</name>
        <dbReference type="ChEBI" id="CHEBI:29105"/>
        <label>1</label>
    </ligand>
</feature>
<feature type="binding site" evidence="1">
    <location>
        <position position="58"/>
    </location>
    <ligand>
        <name>Zn(2+)</name>
        <dbReference type="ChEBI" id="CHEBI:29105"/>
        <label>2</label>
    </ligand>
</feature>
<feature type="binding site" evidence="1">
    <location>
        <position position="59"/>
    </location>
    <ligand>
        <name>Zn(2+)</name>
        <dbReference type="ChEBI" id="CHEBI:29105"/>
        <label>2</label>
    </ligand>
</feature>
<feature type="binding site" evidence="1">
    <location>
        <position position="110"/>
    </location>
    <ligand>
        <name>Zn(2+)</name>
        <dbReference type="ChEBI" id="CHEBI:29105"/>
        <label>1</label>
    </ligand>
</feature>
<feature type="binding site" evidence="1">
    <location>
        <position position="134"/>
    </location>
    <ligand>
        <name>Zn(2+)</name>
        <dbReference type="ChEBI" id="CHEBI:29105"/>
        <label>1</label>
    </ligand>
</feature>
<feature type="binding site" evidence="1">
    <location>
        <position position="134"/>
    </location>
    <ligand>
        <name>Zn(2+)</name>
        <dbReference type="ChEBI" id="CHEBI:29105"/>
        <label>2</label>
    </ligand>
</feature>
<feature type="binding site" evidence="1">
    <location>
        <position position="172"/>
    </location>
    <ligand>
        <name>Zn(2+)</name>
        <dbReference type="ChEBI" id="CHEBI:29105"/>
        <label>2</label>
    </ligand>
</feature>
<feature type="splice variant" id="VSP_030052" description="In isoform 4." evidence="3">
    <original>FGAIHVRCLLTPGHTAGHMSYFLWEDDCPDPPALFSGDALSVAGCGSCLEGSAQQMYQSLAELGTLPPETKVFCGHEHTLSNLEFAQKVEPCNDHVRAKLSWAKARP</original>
    <variation>VSARSREGRGGRPGSTRPHRSACSSAAVRGHPRALPPDARPHRRPHELLPVGGRLPGPTRPVLGRRAVGGRLRLVPGGQRPADVPEPGRAGYPAPRDEGVLRPRAHA</variation>
    <location>
        <begin position="97"/>
        <end position="203"/>
    </location>
</feature>
<feature type="splice variant" id="VSP_030053" description="In isoform 3." evidence="2">
    <original>DALSVAGCGSCLEGSAQQMYQSLAELGTLPPETKVFCGHEHTLSNLEFAQKVEPCNDHVRAKLSWAKAR</original>
    <variation>TRSAERAHPASRRPRPICSDPPSPARRRAVGGRLRLVPGGQRPADVPEPGRAGYPAPRDEGVLRPRAHA</variation>
    <location>
        <begin position="134"/>
        <end position="202"/>
    </location>
</feature>
<feature type="splice variant" id="VSP_030054" description="In isoform 2." evidence="3">
    <original>ARPLSRRGKRVGGEGTGFGVGGALRQGLMVTGACGHSRRGMRMTCPLCRRLWARSASTTPSCGWREYGCCPGASTVTWTLRKASGDCVLG</original>
    <variation>KRDEDDVPTVPSTLGEERLYNPFLRVAEEPVRKFTGKAVPADVLEALCKERARFEQAGEPRQPQARALLALQWGLLSAAPHD</variation>
    <location>
        <begin position="201"/>
        <end position="290"/>
    </location>
</feature>
<feature type="splice variant" id="VSP_030055" description="In isoform 3." evidence="2">
    <location>
        <begin position="203"/>
        <end position="290"/>
    </location>
</feature>
<feature type="splice variant" id="VSP_030056" description="In isoform 4." evidence="3">
    <location>
        <begin position="204"/>
        <end position="290"/>
    </location>
</feature>
<evidence type="ECO:0000250" key="1"/>
<evidence type="ECO:0000303" key="2">
    <source>
    </source>
</evidence>
<evidence type="ECO:0000303" key="3">
    <source>
    </source>
</evidence>
<evidence type="ECO:0000305" key="4"/>
<dbReference type="EC" id="3.1.2.-"/>
<dbReference type="EMBL" id="AK054841">
    <property type="protein sequence ID" value="BAB70814.1"/>
    <property type="molecule type" value="mRNA"/>
</dbReference>
<dbReference type="EMBL" id="AE006464">
    <property type="protein sequence ID" value="AAK61250.1"/>
    <property type="status" value="ALT_SEQ"/>
    <property type="molecule type" value="Genomic_DNA"/>
</dbReference>
<dbReference type="EMBL" id="Z98258">
    <property type="status" value="NOT_ANNOTATED_CDS"/>
    <property type="molecule type" value="Genomic_DNA"/>
</dbReference>
<dbReference type="EMBL" id="CH471112">
    <property type="protein sequence ID" value="EAW85726.1"/>
    <property type="molecule type" value="Genomic_DNA"/>
</dbReference>
<dbReference type="EMBL" id="CH471112">
    <property type="protein sequence ID" value="EAW85730.1"/>
    <property type="molecule type" value="Genomic_DNA"/>
</dbReference>
<dbReference type="EMBL" id="CH471112">
    <property type="protein sequence ID" value="EAW85731.1"/>
    <property type="molecule type" value="Genomic_DNA"/>
</dbReference>
<dbReference type="EMBL" id="CH471112">
    <property type="protein sequence ID" value="EAW85732.1"/>
    <property type="molecule type" value="Genomic_DNA"/>
</dbReference>
<dbReference type="EMBL" id="CH471112">
    <property type="protein sequence ID" value="EAW85733.1"/>
    <property type="molecule type" value="Genomic_DNA"/>
</dbReference>
<dbReference type="EMBL" id="BC004353">
    <property type="protein sequence ID" value="AAH04353.1"/>
    <property type="molecule type" value="mRNA"/>
</dbReference>
<dbReference type="EMBL" id="BC015008">
    <property type="protein sequence ID" value="AAH15008.1"/>
    <property type="molecule type" value="mRNA"/>
</dbReference>
<dbReference type="EMBL" id="BC033796">
    <property type="protein sequence ID" value="AAH33796.1"/>
    <property type="molecule type" value="mRNA"/>
</dbReference>
<dbReference type="EMBL" id="AB209331">
    <property type="protein sequence ID" value="BAD92568.1"/>
    <property type="status" value="ALT_SEQ"/>
    <property type="molecule type" value="mRNA"/>
</dbReference>
<dbReference type="CCDS" id="CCDS32354.1">
    <molecule id="Q6PII5-2"/>
</dbReference>
<dbReference type="CCDS" id="CCDS32355.1">
    <molecule id="Q6PII5-1"/>
</dbReference>
<dbReference type="RefSeq" id="NP_001277066.1">
    <molecule id="Q6PII5-2"/>
    <property type="nucleotide sequence ID" value="NM_001290137.2"/>
</dbReference>
<dbReference type="RefSeq" id="NP_001277068.1">
    <molecule id="Q6PII5-2"/>
    <property type="nucleotide sequence ID" value="NM_001290139.2"/>
</dbReference>
<dbReference type="RefSeq" id="NP_001310564.1">
    <molecule id="Q6PII5-2"/>
    <property type="nucleotide sequence ID" value="NM_001323635.2"/>
</dbReference>
<dbReference type="RefSeq" id="NP_115680.1">
    <molecule id="Q6PII5-2"/>
    <property type="nucleotide sequence ID" value="NM_032304.4"/>
</dbReference>
<dbReference type="RefSeq" id="NP_996995.1">
    <molecule id="Q6PII5-1"/>
    <property type="nucleotide sequence ID" value="NM_207112.2"/>
</dbReference>
<dbReference type="RefSeq" id="XP_005255688.1">
    <property type="nucleotide sequence ID" value="XM_005255631.4"/>
</dbReference>
<dbReference type="RefSeq" id="XP_011521013.1">
    <property type="nucleotide sequence ID" value="XM_011522711.1"/>
</dbReference>
<dbReference type="RefSeq" id="XP_016879262.1">
    <property type="nucleotide sequence ID" value="XM_017023773.1"/>
</dbReference>
<dbReference type="RefSeq" id="XP_047290748.1">
    <molecule id="Q6PII5-1"/>
    <property type="nucleotide sequence ID" value="XM_047434792.1"/>
</dbReference>
<dbReference type="RefSeq" id="XP_054170157.1">
    <molecule id="Q6PII5-1"/>
    <property type="nucleotide sequence ID" value="XM_054314182.1"/>
</dbReference>
<dbReference type="SMR" id="Q6PII5"/>
<dbReference type="BioGRID" id="123991">
    <property type="interactions" value="7"/>
</dbReference>
<dbReference type="FunCoup" id="Q6PII5">
    <property type="interactions" value="173"/>
</dbReference>
<dbReference type="IntAct" id="Q6PII5">
    <property type="interactions" value="6"/>
</dbReference>
<dbReference type="MINT" id="Q6PII5"/>
<dbReference type="STRING" id="9606.ENSP00000374353"/>
<dbReference type="iPTMnet" id="Q6PII5"/>
<dbReference type="PhosphoSitePlus" id="Q6PII5"/>
<dbReference type="BioMuta" id="HAGHL"/>
<dbReference type="DMDM" id="74737738"/>
<dbReference type="jPOST" id="Q6PII5"/>
<dbReference type="MassIVE" id="Q6PII5"/>
<dbReference type="PaxDb" id="9606-ENSP00000374353"/>
<dbReference type="PeptideAtlas" id="Q6PII5"/>
<dbReference type="ProteomicsDB" id="67158">
    <molecule id="Q6PII5-1"/>
</dbReference>
<dbReference type="ProteomicsDB" id="67159">
    <molecule id="Q6PII5-2"/>
</dbReference>
<dbReference type="ProteomicsDB" id="67160">
    <molecule id="Q6PII5-3"/>
</dbReference>
<dbReference type="ProteomicsDB" id="67161">
    <molecule id="Q6PII5-4"/>
</dbReference>
<dbReference type="Antibodypedia" id="59077">
    <property type="antibodies" value="164 antibodies from 12 providers"/>
</dbReference>
<dbReference type="DNASU" id="84264"/>
<dbReference type="Ensembl" id="ENST00000341413.8">
    <molecule id="Q6PII5-1"/>
    <property type="protein sequence ID" value="ENSP00000341952.4"/>
    <property type="gene ID" value="ENSG00000103253.19"/>
</dbReference>
<dbReference type="Ensembl" id="ENST00000389703.8">
    <molecule id="Q6PII5-2"/>
    <property type="protein sequence ID" value="ENSP00000374353.3"/>
    <property type="gene ID" value="ENSG00000103253.19"/>
</dbReference>
<dbReference type="Ensembl" id="ENST00000549114.5">
    <molecule id="Q6PII5-3"/>
    <property type="protein sequence ID" value="ENSP00000447170.1"/>
    <property type="gene ID" value="ENSG00000103253.19"/>
</dbReference>
<dbReference type="Ensembl" id="ENST00000564537.5">
    <molecule id="Q6PII5-3"/>
    <property type="protein sequence ID" value="ENSP00000457219.1"/>
    <property type="gene ID" value="ENSG00000103253.19"/>
</dbReference>
<dbReference type="GeneID" id="84264"/>
<dbReference type="KEGG" id="hsa:84264"/>
<dbReference type="MANE-Select" id="ENST00000389703.8">
    <molecule id="Q6PII5-2"/>
    <property type="protein sequence ID" value="ENSP00000374353.3"/>
    <property type="RefSeq nucleotide sequence ID" value="NM_032304.4"/>
    <property type="RefSeq protein sequence ID" value="NP_115680.1"/>
</dbReference>
<dbReference type="UCSC" id="uc002cjl.1">
    <molecule id="Q6PII5-1"/>
    <property type="organism name" value="human"/>
</dbReference>
<dbReference type="AGR" id="HGNC:14177"/>
<dbReference type="CTD" id="84264"/>
<dbReference type="DisGeNET" id="84264"/>
<dbReference type="GeneCards" id="HAGHL"/>
<dbReference type="HGNC" id="HGNC:14177">
    <property type="gene designation" value="HAGHL"/>
</dbReference>
<dbReference type="HPA" id="ENSG00000103253">
    <property type="expression patterns" value="Tissue enhanced (brain)"/>
</dbReference>
<dbReference type="neXtProt" id="NX_Q6PII5"/>
<dbReference type="OpenTargets" id="ENSG00000103253"/>
<dbReference type="PharmGKB" id="PA29180"/>
<dbReference type="VEuPathDB" id="HostDB:ENSG00000103253"/>
<dbReference type="eggNOG" id="KOG0813">
    <property type="taxonomic scope" value="Eukaryota"/>
</dbReference>
<dbReference type="GeneTree" id="ENSGT00940000161924"/>
<dbReference type="HOGENOM" id="CLU_030571_4_4_1"/>
<dbReference type="InParanoid" id="Q6PII5"/>
<dbReference type="OMA" id="CKERARF"/>
<dbReference type="OrthoDB" id="515692at2759"/>
<dbReference type="PAN-GO" id="Q6PII5">
    <property type="GO annotations" value="1 GO annotation based on evolutionary models"/>
</dbReference>
<dbReference type="PhylomeDB" id="Q6PII5"/>
<dbReference type="TreeFam" id="TF105273"/>
<dbReference type="PathwayCommons" id="Q6PII5"/>
<dbReference type="SignaLink" id="Q6PII5"/>
<dbReference type="BioGRID-ORCS" id="84264">
    <property type="hits" value="12 hits in 1160 CRISPR screens"/>
</dbReference>
<dbReference type="ChiTaRS" id="HAGHL">
    <property type="organism name" value="human"/>
</dbReference>
<dbReference type="GenomeRNAi" id="84264"/>
<dbReference type="Pharos" id="Q6PII5">
    <property type="development level" value="Tbio"/>
</dbReference>
<dbReference type="PRO" id="PR:Q6PII5"/>
<dbReference type="Proteomes" id="UP000005640">
    <property type="component" value="Chromosome 16"/>
</dbReference>
<dbReference type="RNAct" id="Q6PII5">
    <property type="molecule type" value="protein"/>
</dbReference>
<dbReference type="Bgee" id="ENSG00000103253">
    <property type="expression patterns" value="Expressed in pancreatic ductal cell and 157 other cell types or tissues"/>
</dbReference>
<dbReference type="ExpressionAtlas" id="Q6PII5">
    <property type="expression patterns" value="baseline and differential"/>
</dbReference>
<dbReference type="GO" id="GO:0004416">
    <property type="term" value="F:hydroxyacylglutathione hydrolase activity"/>
    <property type="evidence" value="ECO:0000318"/>
    <property type="project" value="GO_Central"/>
</dbReference>
<dbReference type="GO" id="GO:0046872">
    <property type="term" value="F:metal ion binding"/>
    <property type="evidence" value="ECO:0007669"/>
    <property type="project" value="UniProtKB-KW"/>
</dbReference>
<dbReference type="CDD" id="cd07723">
    <property type="entry name" value="hydroxyacylglutathione_hydrolase_MBL-fold"/>
    <property type="match status" value="1"/>
</dbReference>
<dbReference type="Gene3D" id="3.60.15.10">
    <property type="entry name" value="Ribonuclease Z/Hydroxyacylglutathione hydrolase-like"/>
    <property type="match status" value="1"/>
</dbReference>
<dbReference type="InterPro" id="IPR035680">
    <property type="entry name" value="Clx_II_MBL"/>
</dbReference>
<dbReference type="InterPro" id="IPR001279">
    <property type="entry name" value="Metallo-B-lactamas"/>
</dbReference>
<dbReference type="InterPro" id="IPR036866">
    <property type="entry name" value="RibonucZ/Hydroxyglut_hydro"/>
</dbReference>
<dbReference type="PANTHER" id="PTHR11935">
    <property type="entry name" value="BETA LACTAMASE DOMAIN"/>
    <property type="match status" value="1"/>
</dbReference>
<dbReference type="PANTHER" id="PTHR11935:SF77">
    <property type="entry name" value="HYDROXYACYLGLUTATHIONE HYDROLASE-LIKE PROTEIN"/>
    <property type="match status" value="1"/>
</dbReference>
<dbReference type="Pfam" id="PF00753">
    <property type="entry name" value="Lactamase_B"/>
    <property type="match status" value="1"/>
</dbReference>
<dbReference type="SMART" id="SM00849">
    <property type="entry name" value="Lactamase_B"/>
    <property type="match status" value="1"/>
</dbReference>
<dbReference type="SUPFAM" id="SSF56281">
    <property type="entry name" value="Metallo-hydrolase/oxidoreductase"/>
    <property type="match status" value="1"/>
</dbReference>
<accession>Q6PII5</accession>
<accession>A6NCC4</accession>
<accession>D3DU64</accession>
<accession>Q59FX8</accession>
<accession>Q96BZ3</accession>
<accession>Q96NR5</accession>
<accession>Q96S11</accession>
<accession>Q9BT45</accession>
<name>HAGHL_HUMAN</name>
<sequence>MKVKVIPVLEDNYMYLVIEELTREAVAVDVAVPKRLLEIVGREGVSLTAVLTTHHHWDHARGNPELARLRPGLAVLGADERIFSLTRRLAHGEELRFGAIHVRCLLTPGHTAGHMSYFLWEDDCPDPPALFSGDALSVAGCGSCLEGSAQQMYQSLAELGTLPPETKVFCGHEHTLSNLEFAQKVEPCNDHVRAKLSWAKARPLSRRGKRVGGEGTGFGVGGALRQGLMVTGACGHSRRGMRMTCPLCRRLWARSASTTPSCGWREYGCCPGASTVTWTLRKASGDCVLG</sequence>
<protein>
    <recommendedName>
        <fullName>Hydroxyacylglutathione hydrolase-like protein</fullName>
        <ecNumber>3.1.2.-</ecNumber>
    </recommendedName>
</protein>
<organism>
    <name type="scientific">Homo sapiens</name>
    <name type="common">Human</name>
    <dbReference type="NCBI Taxonomy" id="9606"/>
    <lineage>
        <taxon>Eukaryota</taxon>
        <taxon>Metazoa</taxon>
        <taxon>Chordata</taxon>
        <taxon>Craniata</taxon>
        <taxon>Vertebrata</taxon>
        <taxon>Euteleostomi</taxon>
        <taxon>Mammalia</taxon>
        <taxon>Eutheria</taxon>
        <taxon>Euarchontoglires</taxon>
        <taxon>Primates</taxon>
        <taxon>Haplorrhini</taxon>
        <taxon>Catarrhini</taxon>
        <taxon>Hominidae</taxon>
        <taxon>Homo</taxon>
    </lineage>
</organism>
<gene>
    <name type="primary">HAGHL</name>
</gene>
<keyword id="KW-0025">Alternative splicing</keyword>
<keyword id="KW-0378">Hydrolase</keyword>
<keyword id="KW-0479">Metal-binding</keyword>
<keyword id="KW-1267">Proteomics identification</keyword>
<keyword id="KW-1185">Reference proteome</keyword>
<keyword id="KW-0862">Zinc</keyword>
<comment type="function">
    <text evidence="4">Hydrolase acting on ester bonds.</text>
</comment>
<comment type="cofactor">
    <cofactor evidence="1">
        <name>Zn(2+)</name>
        <dbReference type="ChEBI" id="CHEBI:29105"/>
    </cofactor>
    <text evidence="1">Binds 2 Zn(2+) ions per subunit.</text>
</comment>
<comment type="interaction">
    <interactant intactId="EBI-6255752">
        <id>Q6PII5</id>
    </interactant>
    <interactant intactId="EBI-10226858">
        <id>Q0VDC6</id>
        <label>FKBP1A</label>
    </interactant>
    <organismsDiffer>false</organismsDiffer>
    <experiments>3</experiments>
</comment>
<comment type="interaction">
    <interactant intactId="EBI-6255752">
        <id>Q6PII5</id>
    </interactant>
    <interactant intactId="EBI-50433196">
        <id>A0A6Q8PF08</id>
        <label>PMP22</label>
    </interactant>
    <organismsDiffer>false</organismsDiffer>
    <experiments>3</experiments>
</comment>
<comment type="interaction">
    <interactant intactId="EBI-6255752">
        <id>Q6PII5</id>
    </interactant>
    <interactant intactId="EBI-25875545">
        <id>Q8NE91</id>
        <label>TM4SF1</label>
    </interactant>
    <organismsDiffer>false</organismsDiffer>
    <experiments>3</experiments>
</comment>
<comment type="alternative products">
    <event type="alternative splicing"/>
    <isoform>
        <id>Q6PII5-1</id>
        <name>1</name>
        <sequence type="displayed"/>
    </isoform>
    <isoform>
        <id>Q6PII5-2</id>
        <name>2</name>
        <sequence type="described" ref="VSP_030054"/>
    </isoform>
    <isoform>
        <id>Q6PII5-3</id>
        <name>3</name>
        <sequence type="described" ref="VSP_030053 VSP_030055"/>
    </isoform>
    <isoform>
        <id>Q6PII5-4</id>
        <name>4</name>
        <sequence type="described" ref="VSP_030052 VSP_030056"/>
    </isoform>
</comment>
<comment type="similarity">
    <text evidence="4">Belongs to the metallo-beta-lactamase superfamily. Glyoxalase II family.</text>
</comment>
<comment type="sequence caution" evidence="4">
    <conflict type="erroneous gene model prediction">
        <sequence resource="EMBL-CDS" id="AAK61250"/>
    </conflict>
</comment>
<comment type="sequence caution" evidence="4">
    <conflict type="erroneous initiation">
        <sequence resource="EMBL-CDS" id="BAD92568"/>
    </conflict>
    <text>Extended N-terminus.</text>
</comment>
<comment type="sequence caution" evidence="4">
    <conflict type="miscellaneous discrepancy">
        <sequence resource="EMBL-CDS" id="BAD92568"/>
    </conflict>
    <text>Sequence of unknown origin at the C-terminus.</text>
</comment>